<keyword id="KW-0002">3D-structure</keyword>
<keyword id="KW-0963">Cytoplasm</keyword>
<keyword id="KW-0238">DNA-binding</keyword>
<keyword id="KW-0614">Plasmid</keyword>
<keyword id="KW-0804">Transcription</keyword>
<keyword id="KW-0805">Transcription regulation</keyword>
<feature type="chain" id="PRO_0000436897" description="DNA-binding protein Bv3F">
    <location>
        <begin position="1"/>
        <end position="112"/>
    </location>
</feature>
<feature type="DNA-binding region" evidence="4">
    <location>
        <begin position="89"/>
        <end position="95"/>
    </location>
</feature>
<feature type="DNA-binding region" evidence="1">
    <location>
        <begin position="89"/>
        <end position="94"/>
    </location>
</feature>
<feature type="region of interest" description="Disordered" evidence="3">
    <location>
        <begin position="65"/>
        <end position="92"/>
    </location>
</feature>
<feature type="mutagenesis site" description="Loss of DNA-binding, in fragment 71-112." evidence="4">
    <original>RGR</original>
    <variation>AGA</variation>
    <location>
        <begin position="89"/>
        <end position="91"/>
    </location>
</feature>
<feature type="turn" evidence="7">
    <location>
        <begin position="80"/>
        <end position="82"/>
    </location>
</feature>
<feature type="helix" evidence="7">
    <location>
        <begin position="100"/>
        <end position="102"/>
    </location>
</feature>
<comment type="function">
    <text evidence="2 4">A DNA-binding protein implicated in transcriptional repression and chromosome organization and compaction. Binds in the minor groove of AT-rich DNA (PubMed:21673140). Binds nucleation sites in AT-rich DNA and bridges them, forming higher-order nucleoprotein complexes and condensing the chromosome. As many horizontally transferred genes are AT-rich, it plays a central role in silencing foreign genes (By similarity).</text>
</comment>
<comment type="subunit">
    <text evidence="2">Homodimer that oligomerizes on DNA into higher-order complexes that form bridges between disparate regions of DNA compacting it (By similarity).</text>
</comment>
<comment type="subcellular location">
    <subcellularLocation>
        <location evidence="2">Cytoplasm</location>
        <location evidence="2">Nucleoid</location>
    </subcellularLocation>
</comment>
<comment type="miscellaneous">
    <text evidence="6">Encoded on chromosome 3 and plasmid pBVIE02.</text>
</comment>
<comment type="similarity">
    <text evidence="6">Belongs to the histone-like protein H-NS family.</text>
</comment>
<geneLocation type="plasmid">
    <name>pBVIE02</name>
</geneLocation>
<protein>
    <recommendedName>
        <fullName evidence="5">DNA-binding protein Bv3F</fullName>
    </recommendedName>
</protein>
<gene>
    <name type="ordered locus">Bcep1808_6219</name>
    <name type="ordered locus">Bcep1808_7148</name>
</gene>
<accession>A4JS72</accession>
<reference key="1">
    <citation type="submission" date="2007-03" db="EMBL/GenBank/DDBJ databases">
        <title>Complete sequence of chromosome 3 of Burkholderia vietnamiensis G4.</title>
        <authorList>
            <consortium name="US DOE Joint Genome Institute"/>
            <person name="Copeland A."/>
            <person name="Lucas S."/>
            <person name="Lapidus A."/>
            <person name="Barry K."/>
            <person name="Detter J.C."/>
            <person name="Glavina del Rio T."/>
            <person name="Hammon N."/>
            <person name="Israni S."/>
            <person name="Dalin E."/>
            <person name="Tice H."/>
            <person name="Pitluck S."/>
            <person name="Chain P."/>
            <person name="Malfatti S."/>
            <person name="Shin M."/>
            <person name="Vergez L."/>
            <person name="Schmutz J."/>
            <person name="Larimer F."/>
            <person name="Land M."/>
            <person name="Hauser L."/>
            <person name="Kyrpides N."/>
            <person name="Tiedje J."/>
            <person name="Richardson P."/>
        </authorList>
    </citation>
    <scope>NUCLEOTIDE SEQUENCE [LARGE SCALE GENOMIC DNA]</scope>
    <source>
        <strain>G4 / LMG 22486</strain>
    </source>
</reference>
<reference key="2">
    <citation type="submission" date="2007-03" db="EMBL/GenBank/DDBJ databases">
        <title>Complete sequence of plasmid pBVIE02 of Burkholderia vietnamiensis G4.</title>
        <authorList>
            <consortium name="US DOE Joint Genome Institute"/>
            <person name="Copeland A."/>
            <person name="Lucas S."/>
            <person name="Lapidus A."/>
            <person name="Barry K."/>
            <person name="Detter J.C."/>
            <person name="Glavina del Rio T."/>
            <person name="Hammon N."/>
            <person name="Israni S."/>
            <person name="Dalin E."/>
            <person name="Tice H."/>
            <person name="Pitluck S."/>
            <person name="Chain P."/>
            <person name="Malfatti S."/>
            <person name="Shin M."/>
            <person name="Vergez L."/>
            <person name="Schmutz J."/>
            <person name="Larimer F."/>
            <person name="Land M."/>
            <person name="Hauser L."/>
            <person name="Kyrpides N."/>
            <person name="Tiedje J."/>
            <person name="Richardson P."/>
        </authorList>
    </citation>
    <scope>NUCLEOTIDE SEQUENCE [LARGE SCALE GENOMIC DNA]</scope>
    <source>
        <strain>G4 / LMG 22486</strain>
        <plasmid>pBVIE02</plasmid>
    </source>
</reference>
<reference key="3">
    <citation type="journal article" date="2011" name="Proc. Natl. Acad. Sci. U.S.A.">
        <title>Structural basis for recognition of AT-rich DNA by unrelated xenogeneic silencing proteins.</title>
        <authorList>
            <person name="Gordon B.R."/>
            <person name="Li Y."/>
            <person name="Cote A."/>
            <person name="Weirauch M.T."/>
            <person name="Ding P."/>
            <person name="Hughes T.R."/>
            <person name="Navarre W.W."/>
            <person name="Xia B."/>
            <person name="Liu J."/>
        </authorList>
    </citation>
    <scope>STRUCTURE BY NMR OF 71-112</scope>
    <scope>FUNCTION</scope>
    <scope>MUTAGENESIS OF 89-ARG--ARG-91</scope>
</reference>
<proteinExistence type="evidence at protein level"/>
<name>BV3F_BURVG</name>
<organism>
    <name type="scientific">Burkholderia vietnamiensis (strain G4 / LMG 22486)</name>
    <name type="common">Burkholderia cepacia (strain R1808)</name>
    <dbReference type="NCBI Taxonomy" id="269482"/>
    <lineage>
        <taxon>Bacteria</taxon>
        <taxon>Pseudomonadati</taxon>
        <taxon>Pseudomonadota</taxon>
        <taxon>Betaproteobacteria</taxon>
        <taxon>Burkholderiales</taxon>
        <taxon>Burkholderiaceae</taxon>
        <taxon>Burkholderia</taxon>
        <taxon>Burkholderia cepacia complex</taxon>
    </lineage>
</organism>
<dbReference type="EMBL" id="CP000616">
    <property type="protein sequence ID" value="ABO59125.1"/>
    <property type="molecule type" value="Genomic_DNA"/>
</dbReference>
<dbReference type="EMBL" id="CP000618">
    <property type="protein sequence ID" value="ABO60030.1"/>
    <property type="molecule type" value="Genomic_DNA"/>
</dbReference>
<dbReference type="PDB" id="2L92">
    <property type="method" value="NMR"/>
    <property type="chains" value="A=71-112"/>
</dbReference>
<dbReference type="PDBsum" id="2L92"/>
<dbReference type="SMR" id="A4JS72"/>
<dbReference type="KEGG" id="bvi:Bcep1808_6219"/>
<dbReference type="KEGG" id="bvi:Bcep1808_7148"/>
<dbReference type="eggNOG" id="COG2916">
    <property type="taxonomic scope" value="Bacteria"/>
</dbReference>
<dbReference type="HOGENOM" id="CLU_117503_5_1_4"/>
<dbReference type="EvolutionaryTrace" id="A4JS72"/>
<dbReference type="Proteomes" id="UP000002287">
    <property type="component" value="Chromosome 3"/>
</dbReference>
<dbReference type="Proteomes" id="UP000002287">
    <property type="component" value="Plasmid pBVIE02"/>
</dbReference>
<dbReference type="GO" id="GO:0005737">
    <property type="term" value="C:cytoplasm"/>
    <property type="evidence" value="ECO:0007669"/>
    <property type="project" value="UniProtKB-KW"/>
</dbReference>
<dbReference type="GO" id="GO:0009295">
    <property type="term" value="C:nucleoid"/>
    <property type="evidence" value="ECO:0007669"/>
    <property type="project" value="UniProtKB-SubCell"/>
</dbReference>
<dbReference type="GO" id="GO:0003677">
    <property type="term" value="F:DNA binding"/>
    <property type="evidence" value="ECO:0007669"/>
    <property type="project" value="UniProtKB-KW"/>
</dbReference>
<dbReference type="Gene3D" id="4.10.430.30">
    <property type="match status" value="1"/>
</dbReference>
<dbReference type="InterPro" id="IPR027444">
    <property type="entry name" value="H-NS_C_dom"/>
</dbReference>
<dbReference type="PANTHER" id="PTHR38097">
    <property type="match status" value="1"/>
</dbReference>
<dbReference type="PANTHER" id="PTHR38097:SF2">
    <property type="entry name" value="DNA-BINDING PROTEIN STPA"/>
    <property type="match status" value="1"/>
</dbReference>
<dbReference type="Pfam" id="PF00816">
    <property type="entry name" value="Histone_HNS"/>
    <property type="match status" value="1"/>
</dbReference>
<dbReference type="SMART" id="SM00528">
    <property type="entry name" value="HNS"/>
    <property type="match status" value="1"/>
</dbReference>
<dbReference type="SUPFAM" id="SSF81273">
    <property type="entry name" value="H-NS histone-like proteins"/>
    <property type="match status" value="1"/>
</dbReference>
<sequence>MPVQGRENMDPKSPGYLALIAQRESLDAQIIAARKAEREVAIGQIKALMKEFDLSVLDLQERVQKRNSKRMSTVPKYRDPATGKTWSGRGRQPAWLGNDPAAFLIQPDLPAI</sequence>
<evidence type="ECO:0000250" key="1">
    <source>
        <dbReference type="UniProtKB" id="P0A1S2"/>
    </source>
</evidence>
<evidence type="ECO:0000250" key="2">
    <source>
        <dbReference type="UniProtKB" id="P0ACF8"/>
    </source>
</evidence>
<evidence type="ECO:0000256" key="3">
    <source>
        <dbReference type="SAM" id="MobiDB-lite"/>
    </source>
</evidence>
<evidence type="ECO:0000269" key="4">
    <source>
    </source>
</evidence>
<evidence type="ECO:0000303" key="5">
    <source>
    </source>
</evidence>
<evidence type="ECO:0000305" key="6"/>
<evidence type="ECO:0007829" key="7">
    <source>
        <dbReference type="PDB" id="2L92"/>
    </source>
</evidence>